<organism>
    <name type="scientific">Burkholderia mallei (strain ATCC 23344)</name>
    <dbReference type="NCBI Taxonomy" id="243160"/>
    <lineage>
        <taxon>Bacteria</taxon>
        <taxon>Pseudomonadati</taxon>
        <taxon>Pseudomonadota</taxon>
        <taxon>Betaproteobacteria</taxon>
        <taxon>Burkholderiales</taxon>
        <taxon>Burkholderiaceae</taxon>
        <taxon>Burkholderia</taxon>
        <taxon>pseudomallei group</taxon>
    </lineage>
</organism>
<accession>Q62H08</accession>
<sequence>MTQSQHSQSPREALAERIVEAKTRKNLTFEQINEGTGLSVAFTTAALLGQHPLPADAARVVAAKLDLDDDAQRLLQTIPVRGSIPGGVPTDPTIYRFYEIVQVYGSTLKALIHEQFGDGIVSAINFKLDIKKVDDPEGGSRAVITLDGKYLPTKPF</sequence>
<name>CYNS_BURMA</name>
<comment type="function">
    <text evidence="1">Catalyzes the reaction of cyanate with bicarbonate to produce ammonia and carbon dioxide.</text>
</comment>
<comment type="catalytic activity">
    <reaction evidence="1">
        <text>cyanate + hydrogencarbonate + 3 H(+) = NH4(+) + 2 CO2</text>
        <dbReference type="Rhea" id="RHEA:11120"/>
        <dbReference type="ChEBI" id="CHEBI:15378"/>
        <dbReference type="ChEBI" id="CHEBI:16526"/>
        <dbReference type="ChEBI" id="CHEBI:17544"/>
        <dbReference type="ChEBI" id="CHEBI:28938"/>
        <dbReference type="ChEBI" id="CHEBI:29195"/>
        <dbReference type="EC" id="4.2.1.104"/>
    </reaction>
</comment>
<comment type="similarity">
    <text evidence="1">Belongs to the cyanase family.</text>
</comment>
<feature type="chain" id="PRO_1000051469" description="Cyanate hydratase">
    <location>
        <begin position="1"/>
        <end position="156"/>
    </location>
</feature>
<feature type="active site" evidence="1">
    <location>
        <position position="96"/>
    </location>
</feature>
<feature type="active site" evidence="1">
    <location>
        <position position="99"/>
    </location>
</feature>
<feature type="active site" evidence="1">
    <location>
        <position position="122"/>
    </location>
</feature>
<proteinExistence type="inferred from homology"/>
<reference key="1">
    <citation type="journal article" date="2004" name="Proc. Natl. Acad. Sci. U.S.A.">
        <title>Structural flexibility in the Burkholderia mallei genome.</title>
        <authorList>
            <person name="Nierman W.C."/>
            <person name="DeShazer D."/>
            <person name="Kim H.S."/>
            <person name="Tettelin H."/>
            <person name="Nelson K.E."/>
            <person name="Feldblyum T.V."/>
            <person name="Ulrich R.L."/>
            <person name="Ronning C.M."/>
            <person name="Brinkac L.M."/>
            <person name="Daugherty S.C."/>
            <person name="Davidsen T.D."/>
            <person name="DeBoy R.T."/>
            <person name="Dimitrov G."/>
            <person name="Dodson R.J."/>
            <person name="Durkin A.S."/>
            <person name="Gwinn M.L."/>
            <person name="Haft D.H."/>
            <person name="Khouri H.M."/>
            <person name="Kolonay J.F."/>
            <person name="Madupu R."/>
            <person name="Mohammoud Y."/>
            <person name="Nelson W.C."/>
            <person name="Radune D."/>
            <person name="Romero C.M."/>
            <person name="Sarria S."/>
            <person name="Selengut J."/>
            <person name="Shamblin C."/>
            <person name="Sullivan S.A."/>
            <person name="White O."/>
            <person name="Yu Y."/>
            <person name="Zafar N."/>
            <person name="Zhou L."/>
            <person name="Fraser C.M."/>
        </authorList>
    </citation>
    <scope>NUCLEOTIDE SEQUENCE [LARGE SCALE GENOMIC DNA]</scope>
    <source>
        <strain>ATCC 23344</strain>
    </source>
</reference>
<keyword id="KW-0456">Lyase</keyword>
<keyword id="KW-1185">Reference proteome</keyword>
<protein>
    <recommendedName>
        <fullName evidence="1">Cyanate hydratase</fullName>
        <shortName evidence="1">Cyanase</shortName>
        <ecNumber evidence="1">4.2.1.104</ecNumber>
    </recommendedName>
    <alternativeName>
        <fullName evidence="1">Cyanate hydrolase</fullName>
    </alternativeName>
    <alternativeName>
        <fullName evidence="1">Cyanate lyase</fullName>
    </alternativeName>
</protein>
<dbReference type="EC" id="4.2.1.104" evidence="1"/>
<dbReference type="EMBL" id="CP000010">
    <property type="protein sequence ID" value="AAU49682.1"/>
    <property type="molecule type" value="Genomic_DNA"/>
</dbReference>
<dbReference type="RefSeq" id="WP_004194284.1">
    <property type="nucleotide sequence ID" value="NC_006348.1"/>
</dbReference>
<dbReference type="RefSeq" id="YP_104012.1">
    <property type="nucleotide sequence ID" value="NC_006348.1"/>
</dbReference>
<dbReference type="SMR" id="Q62H08"/>
<dbReference type="GeneID" id="93061548"/>
<dbReference type="KEGG" id="bma:BMA2466"/>
<dbReference type="PATRIC" id="fig|243160.12.peg.2543"/>
<dbReference type="eggNOG" id="COG1513">
    <property type="taxonomic scope" value="Bacteria"/>
</dbReference>
<dbReference type="HOGENOM" id="CLU_103452_1_1_4"/>
<dbReference type="Proteomes" id="UP000006693">
    <property type="component" value="Chromosome 1"/>
</dbReference>
<dbReference type="GO" id="GO:0008824">
    <property type="term" value="F:cyanate hydratase activity"/>
    <property type="evidence" value="ECO:0007669"/>
    <property type="project" value="UniProtKB-UniRule"/>
</dbReference>
<dbReference type="GO" id="GO:0003677">
    <property type="term" value="F:DNA binding"/>
    <property type="evidence" value="ECO:0007669"/>
    <property type="project" value="InterPro"/>
</dbReference>
<dbReference type="GO" id="GO:0009439">
    <property type="term" value="P:cyanate metabolic process"/>
    <property type="evidence" value="ECO:0007669"/>
    <property type="project" value="UniProtKB-UniRule"/>
</dbReference>
<dbReference type="CDD" id="cd00559">
    <property type="entry name" value="Cyanase_C"/>
    <property type="match status" value="1"/>
</dbReference>
<dbReference type="Gene3D" id="3.30.1160.10">
    <property type="entry name" value="Cyanate lyase, C-terminal domain"/>
    <property type="match status" value="1"/>
</dbReference>
<dbReference type="Gene3D" id="1.10.260.40">
    <property type="entry name" value="lambda repressor-like DNA-binding domains"/>
    <property type="match status" value="1"/>
</dbReference>
<dbReference type="HAMAP" id="MF_00535">
    <property type="entry name" value="Cyanate_hydrat"/>
    <property type="match status" value="1"/>
</dbReference>
<dbReference type="InterPro" id="IPR008076">
    <property type="entry name" value="Cyanase"/>
</dbReference>
<dbReference type="InterPro" id="IPR003712">
    <property type="entry name" value="Cyanate_lyase_C"/>
</dbReference>
<dbReference type="InterPro" id="IPR036581">
    <property type="entry name" value="Cyanate_lyase_C_sf"/>
</dbReference>
<dbReference type="InterPro" id="IPR048564">
    <property type="entry name" value="CYNS_N"/>
</dbReference>
<dbReference type="InterPro" id="IPR010982">
    <property type="entry name" value="Lambda_DNA-bd_dom_sf"/>
</dbReference>
<dbReference type="NCBIfam" id="TIGR00673">
    <property type="entry name" value="cynS"/>
    <property type="match status" value="1"/>
</dbReference>
<dbReference type="NCBIfam" id="NF002773">
    <property type="entry name" value="PRK02866.1"/>
    <property type="match status" value="1"/>
</dbReference>
<dbReference type="PANTHER" id="PTHR34186">
    <property type="entry name" value="CYANATE HYDRATASE"/>
    <property type="match status" value="1"/>
</dbReference>
<dbReference type="PANTHER" id="PTHR34186:SF2">
    <property type="entry name" value="CYANATE HYDRATASE"/>
    <property type="match status" value="1"/>
</dbReference>
<dbReference type="Pfam" id="PF02560">
    <property type="entry name" value="Cyanate_lyase"/>
    <property type="match status" value="1"/>
</dbReference>
<dbReference type="Pfam" id="PF21291">
    <property type="entry name" value="CYNS_N"/>
    <property type="match status" value="1"/>
</dbReference>
<dbReference type="PIRSF" id="PIRSF001263">
    <property type="entry name" value="Cyanate_hydratas"/>
    <property type="match status" value="1"/>
</dbReference>
<dbReference type="PRINTS" id="PR01693">
    <property type="entry name" value="CYANASE"/>
</dbReference>
<dbReference type="SMART" id="SM01116">
    <property type="entry name" value="Cyanate_lyase"/>
    <property type="match status" value="1"/>
</dbReference>
<dbReference type="SUPFAM" id="SSF55234">
    <property type="entry name" value="Cyanase C-terminal domain"/>
    <property type="match status" value="1"/>
</dbReference>
<dbReference type="SUPFAM" id="SSF47413">
    <property type="entry name" value="lambda repressor-like DNA-binding domains"/>
    <property type="match status" value="1"/>
</dbReference>
<gene>
    <name evidence="1" type="primary">cynS</name>
    <name type="ordered locus">BMA2466</name>
</gene>
<evidence type="ECO:0000255" key="1">
    <source>
        <dbReference type="HAMAP-Rule" id="MF_00535"/>
    </source>
</evidence>